<gene>
    <name evidence="8" type="primary">FOX3</name>
    <name evidence="10" type="ordered locus">At1g26400</name>
    <name evidence="11" type="ORF">T1K7.22</name>
</gene>
<proteinExistence type="inferred from homology"/>
<accession>Q9FZC6</accession>
<sequence>MKALFSVLCLVLLVSILRAAVTKPDSGIFTGCLRNRTSLENPITDAIFTSRNTTTFLSSYVSYTKNKRYSSLNYQKLVAIVAAKHVSHVQATVVCAKANGIQLRIRSGGHDYEGLSYTSSVPFVILDMYNLRSITVDVSSKKAWVQAGATLGELYTKINEASQTLAFPAGVCPTVGVGGHITGGGFGNLMRKFGITVDHVIDAQLIGVNGKLLDRATMGEDLFWAIRGGGGASFGVILSWKINLVEVPKILTVFKVSKTLEQGGTDVLYKWQLVATKVPEDLFIRAWPQIVKGTKLGERTIGVVFFAQFLGPTDKLMEIMSQSLPELGLRREDCHEMSWFNTTLFWANYPVGTPTRVLLDRPSTPGEFFKSKSDNIKKPIPKEGLEKIWKTMLKFNFVWIEFNPYGGVMDRIPATATAFPHRKGNLFNLQYSTIWLDAKETENKLTMMKELYEVAGPYVSSNPREALFNFRDFDIGINPSGLNVDEAKIYGYKYFLGNLKRLMDVKAKCDPDNFFKNEQSILPARVM</sequence>
<comment type="function">
    <text evidence="9">Probable flavin-dependent oxidoreductase.</text>
</comment>
<comment type="cofactor">
    <cofactor evidence="1">
        <name>FAD</name>
        <dbReference type="ChEBI" id="CHEBI:57692"/>
    </cofactor>
    <text evidence="1">Binds 1 FAD per subunit in a bicovalent manner.</text>
</comment>
<comment type="subcellular location">
    <subcellularLocation>
        <location evidence="1">Secreted</location>
        <location evidence="1">Cell wall</location>
    </subcellularLocation>
</comment>
<comment type="PTM">
    <text evidence="1">The FAD cofactor is bound via a bicovalent 6-S-cysteinyl, 8alpha-N1-histidyl FAD linkage.</text>
</comment>
<comment type="disruption phenotype">
    <text evidence="6">No effect on the levels of ICN metabolites.</text>
</comment>
<comment type="similarity">
    <text evidence="9">Belongs to the oxygen-dependent FAD-linked oxidoreductase family.</text>
</comment>
<name>FOX3_ARATH</name>
<reference key="1">
    <citation type="journal article" date="2000" name="Nature">
        <title>Sequence and analysis of chromosome 1 of the plant Arabidopsis thaliana.</title>
        <authorList>
            <person name="Theologis A."/>
            <person name="Ecker J.R."/>
            <person name="Palm C.J."/>
            <person name="Federspiel N.A."/>
            <person name="Kaul S."/>
            <person name="White O."/>
            <person name="Alonso J."/>
            <person name="Altafi H."/>
            <person name="Araujo R."/>
            <person name="Bowman C.L."/>
            <person name="Brooks S.Y."/>
            <person name="Buehler E."/>
            <person name="Chan A."/>
            <person name="Chao Q."/>
            <person name="Chen H."/>
            <person name="Cheuk R.F."/>
            <person name="Chin C.W."/>
            <person name="Chung M.K."/>
            <person name="Conn L."/>
            <person name="Conway A.B."/>
            <person name="Conway A.R."/>
            <person name="Creasy T.H."/>
            <person name="Dewar K."/>
            <person name="Dunn P."/>
            <person name="Etgu P."/>
            <person name="Feldblyum T.V."/>
            <person name="Feng J.-D."/>
            <person name="Fong B."/>
            <person name="Fujii C.Y."/>
            <person name="Gill J.E."/>
            <person name="Goldsmith A.D."/>
            <person name="Haas B."/>
            <person name="Hansen N.F."/>
            <person name="Hughes B."/>
            <person name="Huizar L."/>
            <person name="Hunter J.L."/>
            <person name="Jenkins J."/>
            <person name="Johnson-Hopson C."/>
            <person name="Khan S."/>
            <person name="Khaykin E."/>
            <person name="Kim C.J."/>
            <person name="Koo H.L."/>
            <person name="Kremenetskaia I."/>
            <person name="Kurtz D.B."/>
            <person name="Kwan A."/>
            <person name="Lam B."/>
            <person name="Langin-Hooper S."/>
            <person name="Lee A."/>
            <person name="Lee J.M."/>
            <person name="Lenz C.A."/>
            <person name="Li J.H."/>
            <person name="Li Y.-P."/>
            <person name="Lin X."/>
            <person name="Liu S.X."/>
            <person name="Liu Z.A."/>
            <person name="Luros J.S."/>
            <person name="Maiti R."/>
            <person name="Marziali A."/>
            <person name="Militscher J."/>
            <person name="Miranda M."/>
            <person name="Nguyen M."/>
            <person name="Nierman W.C."/>
            <person name="Osborne B.I."/>
            <person name="Pai G."/>
            <person name="Peterson J."/>
            <person name="Pham P.K."/>
            <person name="Rizzo M."/>
            <person name="Rooney T."/>
            <person name="Rowley D."/>
            <person name="Sakano H."/>
            <person name="Salzberg S.L."/>
            <person name="Schwartz J.R."/>
            <person name="Shinn P."/>
            <person name="Southwick A.M."/>
            <person name="Sun H."/>
            <person name="Tallon L.J."/>
            <person name="Tambunga G."/>
            <person name="Toriumi M.J."/>
            <person name="Town C.D."/>
            <person name="Utterback T."/>
            <person name="Van Aken S."/>
            <person name="Vaysberg M."/>
            <person name="Vysotskaia V.S."/>
            <person name="Walker M."/>
            <person name="Wu D."/>
            <person name="Yu G."/>
            <person name="Fraser C.M."/>
            <person name="Venter J.C."/>
            <person name="Davis R.W."/>
        </authorList>
    </citation>
    <scope>NUCLEOTIDE SEQUENCE [LARGE SCALE GENOMIC DNA]</scope>
    <source>
        <strain>cv. Columbia</strain>
    </source>
</reference>
<reference key="2">
    <citation type="journal article" date="2017" name="Plant J.">
        <title>Araport11: a complete reannotation of the Arabidopsis thaliana reference genome.</title>
        <authorList>
            <person name="Cheng C.Y."/>
            <person name="Krishnakumar V."/>
            <person name="Chan A.P."/>
            <person name="Thibaud-Nissen F."/>
            <person name="Schobel S."/>
            <person name="Town C.D."/>
        </authorList>
    </citation>
    <scope>GENOME REANNOTATION</scope>
    <source>
        <strain>cv. Columbia</strain>
    </source>
</reference>
<reference key="3">
    <citation type="journal article" date="2015" name="Nature">
        <title>A new cyanogenic metabolite in Arabidopsis required for inducible pathogen defence.</title>
        <authorList>
            <person name="Rajniak J."/>
            <person name="Barco B."/>
            <person name="Clay N.K."/>
            <person name="Sattely E.S."/>
        </authorList>
    </citation>
    <scope>DISRUPTION PHENOTYPE</scope>
</reference>
<reference key="4">
    <citation type="journal article" date="2015" name="J. Biol. Chem.">
        <title>Oxidation of monolignols by members of the berberine bridge enzyme family suggests a role in plant cell wall metabolism.</title>
        <authorList>
            <person name="Daniel B."/>
            <person name="Pavkov-Keller T."/>
            <person name="Steiner B."/>
            <person name="Dordic A."/>
            <person name="Gutmann A."/>
            <person name="Nidetzky B."/>
            <person name="Sensen C.W."/>
            <person name="van der Graaff E."/>
            <person name="Wallner S."/>
            <person name="Gruber K."/>
            <person name="Macheroux P."/>
        </authorList>
    </citation>
    <scope>GENE FAMILY</scope>
    <scope>NOMENCLATURE</scope>
</reference>
<dbReference type="EC" id="1.1.1.-" evidence="1"/>
<dbReference type="EC" id="1.-.-.-" evidence="9"/>
<dbReference type="EMBL" id="AC013427">
    <property type="protein sequence ID" value="AAF98576.1"/>
    <property type="molecule type" value="Genomic_DNA"/>
</dbReference>
<dbReference type="EMBL" id="CP002684">
    <property type="protein sequence ID" value="AEE30686.1"/>
    <property type="molecule type" value="Genomic_DNA"/>
</dbReference>
<dbReference type="PIR" id="G86390">
    <property type="entry name" value="G86390"/>
</dbReference>
<dbReference type="RefSeq" id="NP_173964.1">
    <property type="nucleotide sequence ID" value="NM_102404.1"/>
</dbReference>
<dbReference type="SMR" id="Q9FZC6"/>
<dbReference type="FunCoup" id="Q9FZC6">
    <property type="interactions" value="3"/>
</dbReference>
<dbReference type="STRING" id="3702.Q9FZC6"/>
<dbReference type="GlyCosmos" id="Q9FZC6">
    <property type="glycosylation" value="3 sites, No reported glycans"/>
</dbReference>
<dbReference type="GlyGen" id="Q9FZC6">
    <property type="glycosylation" value="4 sites"/>
</dbReference>
<dbReference type="PaxDb" id="3702-AT1G26400.1"/>
<dbReference type="ProteomicsDB" id="230527"/>
<dbReference type="EnsemblPlants" id="AT1G26400.1">
    <property type="protein sequence ID" value="AT1G26400.1"/>
    <property type="gene ID" value="AT1G26400"/>
</dbReference>
<dbReference type="GeneID" id="839182"/>
<dbReference type="Gramene" id="AT1G26400.1">
    <property type="protein sequence ID" value="AT1G26400.1"/>
    <property type="gene ID" value="AT1G26400"/>
</dbReference>
<dbReference type="KEGG" id="ath:AT1G26400"/>
<dbReference type="Araport" id="AT1G26400"/>
<dbReference type="TAIR" id="AT1G26400">
    <property type="gene designation" value="ATBBE5"/>
</dbReference>
<dbReference type="eggNOG" id="ENOG502QVGN">
    <property type="taxonomic scope" value="Eukaryota"/>
</dbReference>
<dbReference type="HOGENOM" id="CLU_018354_6_0_1"/>
<dbReference type="InParanoid" id="Q9FZC6"/>
<dbReference type="OMA" id="CTEMPWV"/>
<dbReference type="PhylomeDB" id="Q9FZC6"/>
<dbReference type="BioCyc" id="ARA:AT1G26400-MONOMER"/>
<dbReference type="PRO" id="PR:Q9FZC6"/>
<dbReference type="Proteomes" id="UP000006548">
    <property type="component" value="Chromosome 1"/>
</dbReference>
<dbReference type="ExpressionAtlas" id="Q9FZC6">
    <property type="expression patterns" value="baseline and differential"/>
</dbReference>
<dbReference type="GO" id="GO:0005576">
    <property type="term" value="C:extracellular region"/>
    <property type="evidence" value="ECO:0007669"/>
    <property type="project" value="UniProtKB-KW"/>
</dbReference>
<dbReference type="GO" id="GO:0009505">
    <property type="term" value="C:plant-type cell wall"/>
    <property type="evidence" value="ECO:0000250"/>
    <property type="project" value="UniProtKB"/>
</dbReference>
<dbReference type="GO" id="GO:0071949">
    <property type="term" value="F:FAD binding"/>
    <property type="evidence" value="ECO:0007669"/>
    <property type="project" value="InterPro"/>
</dbReference>
<dbReference type="GO" id="GO:0016491">
    <property type="term" value="F:oxidoreductase activity"/>
    <property type="evidence" value="ECO:0007669"/>
    <property type="project" value="UniProtKB-KW"/>
</dbReference>
<dbReference type="FunFam" id="3.30.43.10:FF:000004">
    <property type="entry name" value="Berberine bridge enzyme-like 15"/>
    <property type="match status" value="1"/>
</dbReference>
<dbReference type="Gene3D" id="3.30.465.10">
    <property type="match status" value="1"/>
</dbReference>
<dbReference type="Gene3D" id="3.40.462.20">
    <property type="match status" value="1"/>
</dbReference>
<dbReference type="Gene3D" id="3.30.43.10">
    <property type="entry name" value="Uridine Diphospho-n-acetylenolpyruvylglucosamine Reductase, domain 2"/>
    <property type="match status" value="1"/>
</dbReference>
<dbReference type="InterPro" id="IPR012951">
    <property type="entry name" value="BBE"/>
</dbReference>
<dbReference type="InterPro" id="IPR016166">
    <property type="entry name" value="FAD-bd_PCMH"/>
</dbReference>
<dbReference type="InterPro" id="IPR036318">
    <property type="entry name" value="FAD-bd_PCMH-like_sf"/>
</dbReference>
<dbReference type="InterPro" id="IPR016167">
    <property type="entry name" value="FAD-bd_PCMH_sub1"/>
</dbReference>
<dbReference type="InterPro" id="IPR016169">
    <property type="entry name" value="FAD-bd_PCMH_sub2"/>
</dbReference>
<dbReference type="InterPro" id="IPR006094">
    <property type="entry name" value="Oxid_FAD_bind_N"/>
</dbReference>
<dbReference type="PANTHER" id="PTHR32448">
    <property type="entry name" value="OS08G0158400 PROTEIN"/>
    <property type="match status" value="1"/>
</dbReference>
<dbReference type="Pfam" id="PF08031">
    <property type="entry name" value="BBE"/>
    <property type="match status" value="1"/>
</dbReference>
<dbReference type="Pfam" id="PF01565">
    <property type="entry name" value="FAD_binding_4"/>
    <property type="match status" value="1"/>
</dbReference>
<dbReference type="SUPFAM" id="SSF56176">
    <property type="entry name" value="FAD-binding/transporter-associated domain-like"/>
    <property type="match status" value="1"/>
</dbReference>
<dbReference type="PROSITE" id="PS51387">
    <property type="entry name" value="FAD_PCMH"/>
    <property type="match status" value="1"/>
</dbReference>
<evidence type="ECO:0000250" key="1">
    <source>
        <dbReference type="UniProtKB" id="O64743"/>
    </source>
</evidence>
<evidence type="ECO:0000250" key="2">
    <source>
        <dbReference type="UniProtKB" id="P30986"/>
    </source>
</evidence>
<evidence type="ECO:0000255" key="3"/>
<evidence type="ECO:0000255" key="4">
    <source>
        <dbReference type="PROSITE-ProRule" id="PRU00498"/>
    </source>
</evidence>
<evidence type="ECO:0000255" key="5">
    <source>
        <dbReference type="PROSITE-ProRule" id="PRU00718"/>
    </source>
</evidence>
<evidence type="ECO:0000269" key="6">
    <source>
    </source>
</evidence>
<evidence type="ECO:0000303" key="7">
    <source>
    </source>
</evidence>
<evidence type="ECO:0000303" key="8">
    <source>
    </source>
</evidence>
<evidence type="ECO:0000305" key="9"/>
<evidence type="ECO:0000312" key="10">
    <source>
        <dbReference type="Araport" id="AT1G26400"/>
    </source>
</evidence>
<evidence type="ECO:0000312" key="11">
    <source>
        <dbReference type="EMBL" id="AAF98576.1"/>
    </source>
</evidence>
<feature type="signal peptide" evidence="3">
    <location>
        <begin position="1"/>
        <end position="19"/>
    </location>
</feature>
<feature type="chain" id="PRO_5004325687" description="Berberine bridge enzyme-like 5">
    <location>
        <begin position="20"/>
        <end position="527"/>
    </location>
</feature>
<feature type="domain" description="FAD-binding PCMH-type" evidence="5">
    <location>
        <begin position="73"/>
        <end position="247"/>
    </location>
</feature>
<feature type="glycosylation site" description="N-linked (GlcNAc...) asparagine" evidence="4">
    <location>
        <position position="35"/>
    </location>
</feature>
<feature type="glycosylation site" description="N-linked (GlcNAc...) asparagine" evidence="4">
    <location>
        <position position="52"/>
    </location>
</feature>
<feature type="glycosylation site" description="N-linked (GlcNAc...) asparagine" evidence="4">
    <location>
        <position position="341"/>
    </location>
</feature>
<feature type="disulfide bond" evidence="2">
    <location>
        <begin position="32"/>
        <end position="95"/>
    </location>
</feature>
<feature type="cross-link" description="6-(S-cysteinyl)-8alpha-(pros-histidyl)-FAD (His-Cys)" evidence="1">
    <location>
        <begin position="110"/>
        <end position="172"/>
    </location>
</feature>
<protein>
    <recommendedName>
        <fullName evidence="7">Berberine bridge enzyme-like 5</fullName>
        <shortName evidence="7">AtBBE-like 5</shortName>
        <ecNumber evidence="1">1.1.1.-</ecNumber>
    </recommendedName>
    <alternativeName>
        <fullName evidence="8">Flavin-dependent oxidoreductase FOX3</fullName>
        <ecNumber evidence="9">1.-.-.-</ecNumber>
    </alternativeName>
</protein>
<keyword id="KW-0134">Cell wall</keyword>
<keyword id="KW-1015">Disulfide bond</keyword>
<keyword id="KW-0274">FAD</keyword>
<keyword id="KW-0285">Flavoprotein</keyword>
<keyword id="KW-0325">Glycoprotein</keyword>
<keyword id="KW-0547">Nucleotide-binding</keyword>
<keyword id="KW-0560">Oxidoreductase</keyword>
<keyword id="KW-1185">Reference proteome</keyword>
<keyword id="KW-0964">Secreted</keyword>
<keyword id="KW-0732">Signal</keyword>
<organism>
    <name type="scientific">Arabidopsis thaliana</name>
    <name type="common">Mouse-ear cress</name>
    <dbReference type="NCBI Taxonomy" id="3702"/>
    <lineage>
        <taxon>Eukaryota</taxon>
        <taxon>Viridiplantae</taxon>
        <taxon>Streptophyta</taxon>
        <taxon>Embryophyta</taxon>
        <taxon>Tracheophyta</taxon>
        <taxon>Spermatophyta</taxon>
        <taxon>Magnoliopsida</taxon>
        <taxon>eudicotyledons</taxon>
        <taxon>Gunneridae</taxon>
        <taxon>Pentapetalae</taxon>
        <taxon>rosids</taxon>
        <taxon>malvids</taxon>
        <taxon>Brassicales</taxon>
        <taxon>Brassicaceae</taxon>
        <taxon>Camelineae</taxon>
        <taxon>Arabidopsis</taxon>
    </lineage>
</organism>